<comment type="function">
    <text evidence="1">Catalyzes the conversion of uracil and 5-phospho-alpha-D-ribose 1-diphosphate (PRPP) to UMP and diphosphate.</text>
</comment>
<comment type="catalytic activity">
    <reaction evidence="1">
        <text>UMP + diphosphate = 5-phospho-alpha-D-ribose 1-diphosphate + uracil</text>
        <dbReference type="Rhea" id="RHEA:13017"/>
        <dbReference type="ChEBI" id="CHEBI:17568"/>
        <dbReference type="ChEBI" id="CHEBI:33019"/>
        <dbReference type="ChEBI" id="CHEBI:57865"/>
        <dbReference type="ChEBI" id="CHEBI:58017"/>
        <dbReference type="EC" id="2.4.2.9"/>
    </reaction>
</comment>
<comment type="cofactor">
    <cofactor evidence="1">
        <name>Mg(2+)</name>
        <dbReference type="ChEBI" id="CHEBI:18420"/>
    </cofactor>
    <text evidence="1">Binds 1 Mg(2+) ion per subunit. The magnesium is bound as Mg-PRPP.</text>
</comment>
<comment type="activity regulation">
    <text evidence="1">Allosterically activated by GTP.</text>
</comment>
<comment type="pathway">
    <text evidence="1">Pyrimidine metabolism; UMP biosynthesis via salvage pathway; UMP from uracil: step 1/1.</text>
</comment>
<comment type="similarity">
    <text evidence="1">Belongs to the UPRTase family.</text>
</comment>
<comment type="sequence caution" evidence="2">
    <conflict type="erroneous initiation">
        <sequence resource="EMBL-CDS" id="CAC32312"/>
    </conflict>
</comment>
<name>UPP_STRCO</name>
<proteinExistence type="inferred from homology"/>
<organism>
    <name type="scientific">Streptomyces coelicolor (strain ATCC BAA-471 / A3(2) / M145)</name>
    <dbReference type="NCBI Taxonomy" id="100226"/>
    <lineage>
        <taxon>Bacteria</taxon>
        <taxon>Bacillati</taxon>
        <taxon>Actinomycetota</taxon>
        <taxon>Actinomycetes</taxon>
        <taxon>Kitasatosporales</taxon>
        <taxon>Streptomycetaceae</taxon>
        <taxon>Streptomyces</taxon>
        <taxon>Streptomyces albidoflavus group</taxon>
    </lineage>
</organism>
<accession>Q9AK76</accession>
<reference key="1">
    <citation type="journal article" date="2002" name="Nature">
        <title>Complete genome sequence of the model actinomycete Streptomyces coelicolor A3(2).</title>
        <authorList>
            <person name="Bentley S.D."/>
            <person name="Chater K.F."/>
            <person name="Cerdeno-Tarraga A.-M."/>
            <person name="Challis G.L."/>
            <person name="Thomson N.R."/>
            <person name="James K.D."/>
            <person name="Harris D.E."/>
            <person name="Quail M.A."/>
            <person name="Kieser H."/>
            <person name="Harper D."/>
            <person name="Bateman A."/>
            <person name="Brown S."/>
            <person name="Chandra G."/>
            <person name="Chen C.W."/>
            <person name="Collins M."/>
            <person name="Cronin A."/>
            <person name="Fraser A."/>
            <person name="Goble A."/>
            <person name="Hidalgo J."/>
            <person name="Hornsby T."/>
            <person name="Howarth S."/>
            <person name="Huang C.-H."/>
            <person name="Kieser T."/>
            <person name="Larke L."/>
            <person name="Murphy L.D."/>
            <person name="Oliver K."/>
            <person name="O'Neil S."/>
            <person name="Rabbinowitsch E."/>
            <person name="Rajandream M.A."/>
            <person name="Rutherford K.M."/>
            <person name="Rutter S."/>
            <person name="Seeger K."/>
            <person name="Saunders D."/>
            <person name="Sharp S."/>
            <person name="Squares R."/>
            <person name="Squares S."/>
            <person name="Taylor K."/>
            <person name="Warren T."/>
            <person name="Wietzorrek A."/>
            <person name="Woodward J.R."/>
            <person name="Barrell B.G."/>
            <person name="Parkhill J."/>
            <person name="Hopwood D.A."/>
        </authorList>
    </citation>
    <scope>NUCLEOTIDE SEQUENCE [LARGE SCALE GENOMIC DNA]</scope>
    <source>
        <strain>ATCC BAA-471 / A3(2) / M145</strain>
    </source>
</reference>
<keyword id="KW-0021">Allosteric enzyme</keyword>
<keyword id="KW-0328">Glycosyltransferase</keyword>
<keyword id="KW-0342">GTP-binding</keyword>
<keyword id="KW-0460">Magnesium</keyword>
<keyword id="KW-0547">Nucleotide-binding</keyword>
<keyword id="KW-1185">Reference proteome</keyword>
<keyword id="KW-0808">Transferase</keyword>
<dbReference type="EC" id="2.4.2.9" evidence="1"/>
<dbReference type="EMBL" id="AL939118">
    <property type="protein sequence ID" value="CAC32312.1"/>
    <property type="status" value="ALT_INIT"/>
    <property type="molecule type" value="Genomic_DNA"/>
</dbReference>
<dbReference type="RefSeq" id="NP_628223.1">
    <property type="nucleotide sequence ID" value="NC_003888.3"/>
</dbReference>
<dbReference type="RefSeq" id="WP_003974921.1">
    <property type="nucleotide sequence ID" value="NZ_VNID01000032.1"/>
</dbReference>
<dbReference type="SMR" id="Q9AK76"/>
<dbReference type="FunCoup" id="Q9AK76">
    <property type="interactions" value="390"/>
</dbReference>
<dbReference type="STRING" id="100226.gene:17761672"/>
<dbReference type="PaxDb" id="100226-SCO4041"/>
<dbReference type="GeneID" id="96656559"/>
<dbReference type="KEGG" id="sco:SCO4041"/>
<dbReference type="PATRIC" id="fig|100226.15.peg.4104"/>
<dbReference type="eggNOG" id="COG0035">
    <property type="taxonomic scope" value="Bacteria"/>
</dbReference>
<dbReference type="HOGENOM" id="CLU_067096_2_3_11"/>
<dbReference type="InParanoid" id="Q9AK76"/>
<dbReference type="OrthoDB" id="9781675at2"/>
<dbReference type="PhylomeDB" id="Q9AK76"/>
<dbReference type="UniPathway" id="UPA00574">
    <property type="reaction ID" value="UER00636"/>
</dbReference>
<dbReference type="Proteomes" id="UP000001973">
    <property type="component" value="Chromosome"/>
</dbReference>
<dbReference type="GO" id="GO:0003999">
    <property type="term" value="F:adenine phosphoribosyltransferase activity"/>
    <property type="evidence" value="ECO:0000318"/>
    <property type="project" value="GO_Central"/>
</dbReference>
<dbReference type="GO" id="GO:0005525">
    <property type="term" value="F:GTP binding"/>
    <property type="evidence" value="ECO:0007669"/>
    <property type="project" value="UniProtKB-KW"/>
</dbReference>
<dbReference type="GO" id="GO:0000287">
    <property type="term" value="F:magnesium ion binding"/>
    <property type="evidence" value="ECO:0007669"/>
    <property type="project" value="UniProtKB-UniRule"/>
</dbReference>
<dbReference type="GO" id="GO:0004845">
    <property type="term" value="F:uracil phosphoribosyltransferase activity"/>
    <property type="evidence" value="ECO:0007669"/>
    <property type="project" value="UniProtKB-UniRule"/>
</dbReference>
<dbReference type="GO" id="GO:0044206">
    <property type="term" value="P:UMP salvage"/>
    <property type="evidence" value="ECO:0007669"/>
    <property type="project" value="UniProtKB-UniRule"/>
</dbReference>
<dbReference type="GO" id="GO:0006223">
    <property type="term" value="P:uracil salvage"/>
    <property type="evidence" value="ECO:0007669"/>
    <property type="project" value="InterPro"/>
</dbReference>
<dbReference type="CDD" id="cd06223">
    <property type="entry name" value="PRTases_typeI"/>
    <property type="match status" value="1"/>
</dbReference>
<dbReference type="FunFam" id="3.40.50.2020:FF:000003">
    <property type="entry name" value="Uracil phosphoribosyltransferase"/>
    <property type="match status" value="1"/>
</dbReference>
<dbReference type="Gene3D" id="3.40.50.2020">
    <property type="match status" value="1"/>
</dbReference>
<dbReference type="HAMAP" id="MF_01218_B">
    <property type="entry name" value="Upp_B"/>
    <property type="match status" value="1"/>
</dbReference>
<dbReference type="InterPro" id="IPR000836">
    <property type="entry name" value="PRibTrfase_dom"/>
</dbReference>
<dbReference type="InterPro" id="IPR029057">
    <property type="entry name" value="PRTase-like"/>
</dbReference>
<dbReference type="InterPro" id="IPR034332">
    <property type="entry name" value="Upp_B"/>
</dbReference>
<dbReference type="InterPro" id="IPR050054">
    <property type="entry name" value="UPRTase/APRTase"/>
</dbReference>
<dbReference type="InterPro" id="IPR005765">
    <property type="entry name" value="Ura_phspho_trans"/>
</dbReference>
<dbReference type="NCBIfam" id="NF001097">
    <property type="entry name" value="PRK00129.1"/>
    <property type="match status" value="1"/>
</dbReference>
<dbReference type="NCBIfam" id="TIGR01091">
    <property type="entry name" value="upp"/>
    <property type="match status" value="1"/>
</dbReference>
<dbReference type="PANTHER" id="PTHR32315">
    <property type="entry name" value="ADENINE PHOSPHORIBOSYLTRANSFERASE"/>
    <property type="match status" value="1"/>
</dbReference>
<dbReference type="PANTHER" id="PTHR32315:SF4">
    <property type="entry name" value="URACIL PHOSPHORIBOSYLTRANSFERASE, CHLOROPLASTIC"/>
    <property type="match status" value="1"/>
</dbReference>
<dbReference type="Pfam" id="PF14681">
    <property type="entry name" value="UPRTase"/>
    <property type="match status" value="1"/>
</dbReference>
<dbReference type="SUPFAM" id="SSF53271">
    <property type="entry name" value="PRTase-like"/>
    <property type="match status" value="1"/>
</dbReference>
<gene>
    <name evidence="1" type="primary">upp</name>
    <name type="ordered locus">SCO4041</name>
    <name type="ORF">2SCD60.07</name>
</gene>
<evidence type="ECO:0000255" key="1">
    <source>
        <dbReference type="HAMAP-Rule" id="MF_01218"/>
    </source>
</evidence>
<evidence type="ECO:0000305" key="2"/>
<protein>
    <recommendedName>
        <fullName evidence="1">Uracil phosphoribosyltransferase</fullName>
        <ecNumber evidence="1">2.4.2.9</ecNumber>
    </recommendedName>
    <alternativeName>
        <fullName evidence="1">UMP pyrophosphorylase</fullName>
    </alternativeName>
    <alternativeName>
        <fullName evidence="1">UPRTase</fullName>
    </alternativeName>
</protein>
<feature type="chain" id="PRO_0000120892" description="Uracil phosphoribosyltransferase">
    <location>
        <begin position="1"/>
        <end position="211"/>
    </location>
</feature>
<feature type="binding site" evidence="1">
    <location>
        <position position="78"/>
    </location>
    <ligand>
        <name>5-phospho-alpha-D-ribose 1-diphosphate</name>
        <dbReference type="ChEBI" id="CHEBI:58017"/>
    </ligand>
</feature>
<feature type="binding site" evidence="1">
    <location>
        <position position="103"/>
    </location>
    <ligand>
        <name>5-phospho-alpha-D-ribose 1-diphosphate</name>
        <dbReference type="ChEBI" id="CHEBI:58017"/>
    </ligand>
</feature>
<feature type="binding site" evidence="1">
    <location>
        <begin position="130"/>
        <end position="138"/>
    </location>
    <ligand>
        <name>5-phospho-alpha-D-ribose 1-diphosphate</name>
        <dbReference type="ChEBI" id="CHEBI:58017"/>
    </ligand>
</feature>
<feature type="binding site" evidence="1">
    <location>
        <position position="195"/>
    </location>
    <ligand>
        <name>uracil</name>
        <dbReference type="ChEBI" id="CHEBI:17568"/>
    </ligand>
</feature>
<feature type="binding site" evidence="1">
    <location>
        <begin position="200"/>
        <end position="202"/>
    </location>
    <ligand>
        <name>uracil</name>
        <dbReference type="ChEBI" id="CHEBI:17568"/>
    </ligand>
</feature>
<feature type="binding site" evidence="1">
    <location>
        <position position="201"/>
    </location>
    <ligand>
        <name>5-phospho-alpha-D-ribose 1-diphosphate</name>
        <dbReference type="ChEBI" id="CHEBI:58017"/>
    </ligand>
</feature>
<sequence length="211" mass="22922">MRLHVVDHPLVAHKLTTLRDQRTDSATFRRLADELVTLLAYEATRDVRTEQVDIHTPVSRTTGVKLSHPRPLVVPILRAGLGMLDGMVRLLPTAEVGFLGMVRNEETLQASTYATRMPDDLSGRQVYVLDPMLATGGTLVASIRELIKRGADDVTAVVLLAAPEGVELMERELAGTPVTVVTASVDERLNEQGYIVPGLGDAGDRMYGAAE</sequence>